<organism>
    <name type="scientific">Bacillus subtilis (strain 168)</name>
    <dbReference type="NCBI Taxonomy" id="224308"/>
    <lineage>
        <taxon>Bacteria</taxon>
        <taxon>Bacillati</taxon>
        <taxon>Bacillota</taxon>
        <taxon>Bacilli</taxon>
        <taxon>Bacillales</taxon>
        <taxon>Bacillaceae</taxon>
        <taxon>Bacillus</taxon>
    </lineage>
</organism>
<gene>
    <name type="primary">ydiR</name>
    <name type="ordered locus">BSU06090</name>
</gene>
<keyword id="KW-0255">Endonuclease</keyword>
<keyword id="KW-0378">Hydrolase</keyword>
<keyword id="KW-0540">Nuclease</keyword>
<keyword id="KW-1185">Reference proteome</keyword>
<keyword id="KW-0680">Restriction system</keyword>
<evidence type="ECO:0000256" key="1">
    <source>
        <dbReference type="SAM" id="MobiDB-lite"/>
    </source>
</evidence>
<evidence type="ECO:0000269" key="2">
    <source>
    </source>
</evidence>
<evidence type="ECO:0000269" key="3">
    <source>
    </source>
</evidence>
<evidence type="ECO:0000269" key="4">
    <source>
    </source>
</evidence>
<evidence type="ECO:0000303" key="5">
    <source>
    </source>
</evidence>
<comment type="function">
    <text evidence="3 4 5">A P subtype restriction enzyme that recognizes the double-stranded sequence 5'-CTCGAG-3'; the cleavage site is unknown.</text>
</comment>
<comment type="catalytic activity">
    <reaction evidence="3">
        <text>Endonucleolytic cleavage of DNA to give specific double-stranded fragments with terminal 5'-phosphates.</text>
        <dbReference type="EC" id="3.1.21.4"/>
    </reaction>
</comment>
<comment type="subunit">
    <text evidence="2">BsuMI restriction activity requires YdiR, YdiS and YdjA.</text>
</comment>
<comment type="developmental stage">
    <text evidence="2">Not expressed during sporulation.</text>
</comment>
<comment type="induction">
    <text evidence="2">Constitutively expressed during exponential growth. Encoded in an operon with ydiS and ydjA.</text>
</comment>
<comment type="disruption phenotype">
    <text evidence="2 4">Not essential; its disruption results in increased transformation by plasmid DNA carrying multiple BsuMI target sequences (PubMed:11751814). Triple deletion ydiO-ydiP-ydiS leads to loss of susceptibility to MspJI, which only digests C-methylated DNA (PubMed:32324221).</text>
</comment>
<accession>O35025</accession>
<proteinExistence type="evidence at protein level"/>
<feature type="chain" id="PRO_0000049509" description="Type II restriction enzyme BsuMI component YdiR">
    <location>
        <begin position="1"/>
        <end position="313"/>
    </location>
</feature>
<feature type="region of interest" description="Disordered" evidence="1">
    <location>
        <begin position="289"/>
        <end position="313"/>
    </location>
</feature>
<sequence>MTFIKRLEDAYETLLGNYPAGVSSTSTSKYNEIRKIVSEAFLIGENEVYVTGTSRRISNLDTRFAQGNQRNKHTRMAVAFISIPSVDDSELDELIIRTRNSAITTSSKFCNGEERGTIFDGILLFLVFEGETKVYPLAFLVFENDFELKEKAEELIPGIELKEYPRANQSPAQENNKSAKNEDEESAKSYVVFLDIEEDGSIVEFVEDKDKTYRIGDMIWTASHTNGSSAITRRLEVIEVVENLVVCKIKHKYNEPVDKNSLLKFVNIEQDLISFLDLHPNVQNGSEGFVSGDIVDENATTSSDDLPEDFENN</sequence>
<reference key="1">
    <citation type="journal article" date="1997" name="DNA Res.">
        <title>Sequence analysis of the groESL-cotA region of the Bacillus subtilis genome, containing the restriction/modification system genes.</title>
        <authorList>
            <person name="Kasahara Y."/>
            <person name="Nakai S."/>
            <person name="Ogasawara N."/>
            <person name="Yata K."/>
            <person name="Sadaie Y."/>
        </authorList>
    </citation>
    <scope>NUCLEOTIDE SEQUENCE [GENOMIC DNA]</scope>
    <source>
        <strain>168 / Marburg / ATCC 6051 / DSM 10 / JCM 1465 / NBRC 13719 / NCIMB 3610 / NRRL NRS-744 / VKM B-501</strain>
    </source>
</reference>
<reference key="2">
    <citation type="journal article" date="1997" name="Nature">
        <title>The complete genome sequence of the Gram-positive bacterium Bacillus subtilis.</title>
        <authorList>
            <person name="Kunst F."/>
            <person name="Ogasawara N."/>
            <person name="Moszer I."/>
            <person name="Albertini A.M."/>
            <person name="Alloni G."/>
            <person name="Azevedo V."/>
            <person name="Bertero M.G."/>
            <person name="Bessieres P."/>
            <person name="Bolotin A."/>
            <person name="Borchert S."/>
            <person name="Borriss R."/>
            <person name="Boursier L."/>
            <person name="Brans A."/>
            <person name="Braun M."/>
            <person name="Brignell S.C."/>
            <person name="Bron S."/>
            <person name="Brouillet S."/>
            <person name="Bruschi C.V."/>
            <person name="Caldwell B."/>
            <person name="Capuano V."/>
            <person name="Carter N.M."/>
            <person name="Choi S.-K."/>
            <person name="Codani J.-J."/>
            <person name="Connerton I.F."/>
            <person name="Cummings N.J."/>
            <person name="Daniel R.A."/>
            <person name="Denizot F."/>
            <person name="Devine K.M."/>
            <person name="Duesterhoeft A."/>
            <person name="Ehrlich S.D."/>
            <person name="Emmerson P.T."/>
            <person name="Entian K.-D."/>
            <person name="Errington J."/>
            <person name="Fabret C."/>
            <person name="Ferrari E."/>
            <person name="Foulger D."/>
            <person name="Fritz C."/>
            <person name="Fujita M."/>
            <person name="Fujita Y."/>
            <person name="Fuma S."/>
            <person name="Galizzi A."/>
            <person name="Galleron N."/>
            <person name="Ghim S.-Y."/>
            <person name="Glaser P."/>
            <person name="Goffeau A."/>
            <person name="Golightly E.J."/>
            <person name="Grandi G."/>
            <person name="Guiseppi G."/>
            <person name="Guy B.J."/>
            <person name="Haga K."/>
            <person name="Haiech J."/>
            <person name="Harwood C.R."/>
            <person name="Henaut A."/>
            <person name="Hilbert H."/>
            <person name="Holsappel S."/>
            <person name="Hosono S."/>
            <person name="Hullo M.-F."/>
            <person name="Itaya M."/>
            <person name="Jones L.-M."/>
            <person name="Joris B."/>
            <person name="Karamata D."/>
            <person name="Kasahara Y."/>
            <person name="Klaerr-Blanchard M."/>
            <person name="Klein C."/>
            <person name="Kobayashi Y."/>
            <person name="Koetter P."/>
            <person name="Koningstein G."/>
            <person name="Krogh S."/>
            <person name="Kumano M."/>
            <person name="Kurita K."/>
            <person name="Lapidus A."/>
            <person name="Lardinois S."/>
            <person name="Lauber J."/>
            <person name="Lazarevic V."/>
            <person name="Lee S.-M."/>
            <person name="Levine A."/>
            <person name="Liu H."/>
            <person name="Masuda S."/>
            <person name="Mauel C."/>
            <person name="Medigue C."/>
            <person name="Medina N."/>
            <person name="Mellado R.P."/>
            <person name="Mizuno M."/>
            <person name="Moestl D."/>
            <person name="Nakai S."/>
            <person name="Noback M."/>
            <person name="Noone D."/>
            <person name="O'Reilly M."/>
            <person name="Ogawa K."/>
            <person name="Ogiwara A."/>
            <person name="Oudega B."/>
            <person name="Park S.-H."/>
            <person name="Parro V."/>
            <person name="Pohl T.M."/>
            <person name="Portetelle D."/>
            <person name="Porwollik S."/>
            <person name="Prescott A.M."/>
            <person name="Presecan E."/>
            <person name="Pujic P."/>
            <person name="Purnelle B."/>
            <person name="Rapoport G."/>
            <person name="Rey M."/>
            <person name="Reynolds S."/>
            <person name="Rieger M."/>
            <person name="Rivolta C."/>
            <person name="Rocha E."/>
            <person name="Roche B."/>
            <person name="Rose M."/>
            <person name="Sadaie Y."/>
            <person name="Sato T."/>
            <person name="Scanlan E."/>
            <person name="Schleich S."/>
            <person name="Schroeter R."/>
            <person name="Scoffone F."/>
            <person name="Sekiguchi J."/>
            <person name="Sekowska A."/>
            <person name="Seror S.J."/>
            <person name="Serror P."/>
            <person name="Shin B.-S."/>
            <person name="Soldo B."/>
            <person name="Sorokin A."/>
            <person name="Tacconi E."/>
            <person name="Takagi T."/>
            <person name="Takahashi H."/>
            <person name="Takemaru K."/>
            <person name="Takeuchi M."/>
            <person name="Tamakoshi A."/>
            <person name="Tanaka T."/>
            <person name="Terpstra P."/>
            <person name="Tognoni A."/>
            <person name="Tosato V."/>
            <person name="Uchiyama S."/>
            <person name="Vandenbol M."/>
            <person name="Vannier F."/>
            <person name="Vassarotti A."/>
            <person name="Viari A."/>
            <person name="Wambutt R."/>
            <person name="Wedler E."/>
            <person name="Wedler H."/>
            <person name="Weitzenegger T."/>
            <person name="Winters P."/>
            <person name="Wipat A."/>
            <person name="Yamamoto H."/>
            <person name="Yamane K."/>
            <person name="Yasumoto K."/>
            <person name="Yata K."/>
            <person name="Yoshida K."/>
            <person name="Yoshikawa H.-F."/>
            <person name="Zumstein E."/>
            <person name="Yoshikawa H."/>
            <person name="Danchin A."/>
        </authorList>
    </citation>
    <scope>NUCLEOTIDE SEQUENCE [LARGE SCALE GENOMIC DNA]</scope>
    <source>
        <strain>168</strain>
    </source>
</reference>
<reference key="3">
    <citation type="journal article" date="1988" name="Mol. Gen. Genet.">
        <title>Restriction and modification in Bacillus subtilis Marburg 168: target sites and effects on plasmid transformation.</title>
        <authorList>
            <person name="Bron S."/>
            <person name="Janniere L."/>
            <person name="Ehrlich S.D."/>
        </authorList>
    </citation>
    <scope>FUNCTION</scope>
    <scope>DNA TARGET SEQUENCE</scope>
    <source>
        <strain>168 / Marburg / ATCC 6051 / DSM 10 / JCM 1465 / NBRC 13719 / NCIMB 3610 / NRRL NRS-744 / VKM B-501</strain>
    </source>
</reference>
<reference key="4">
    <citation type="journal article" date="2002" name="J. Bacteriol.">
        <title>Molecular organization of intrinsic restriction and modification genes BsuM of Bacillus subtilis Marburg.</title>
        <authorList>
            <person name="Ohshima H."/>
            <person name="Matsuoka S."/>
            <person name="Asai K."/>
            <person name="Sadaie Y."/>
        </authorList>
    </citation>
    <scope>SUBUNIT</scope>
    <scope>DEVELOPMENTAL STAGE</scope>
    <scope>INDUCTION</scope>
    <scope>OPERON STRUCTURE</scope>
    <scope>DISRUPTION PHENOTYPE</scope>
    <source>
        <strain>168 / Marburg / ATCC 6051 / DSM 10 / JCM 1465 / NBRC 13719 / NCIMB 3610 / NRRL NRS-744 / VKM B-501</strain>
    </source>
</reference>
<reference key="5">
    <citation type="journal article" date="2003" name="Nucleic Acids Res.">
        <title>A nomenclature for restriction enzymes, DNA methyltransferases, homing endonucleases and their genes.</title>
        <authorList>
            <person name="Roberts R.J."/>
            <person name="Belfort M."/>
            <person name="Bestor T."/>
            <person name="Bhagwat A.S."/>
            <person name="Bickle T.A."/>
            <person name="Bitinaite J."/>
            <person name="Blumenthal R.M."/>
            <person name="Degtyarev S.K."/>
            <person name="Dryden D.T."/>
            <person name="Dybvig K."/>
            <person name="Firman K."/>
            <person name="Gromova E.S."/>
            <person name="Gumport R.I."/>
            <person name="Halford S.E."/>
            <person name="Hattman S."/>
            <person name="Heitman J."/>
            <person name="Hornby D.P."/>
            <person name="Janulaitis A."/>
            <person name="Jeltsch A."/>
            <person name="Josephsen J."/>
            <person name="Kiss A."/>
            <person name="Klaenhammer T.R."/>
            <person name="Kobayashi I."/>
            <person name="Kong H."/>
            <person name="Krueger D.H."/>
            <person name="Lacks S."/>
            <person name="Marinus M.G."/>
            <person name="Miyahara M."/>
            <person name="Morgan R.D."/>
            <person name="Murray N.E."/>
            <person name="Nagaraja V."/>
            <person name="Piekarowicz A."/>
            <person name="Pingoud A."/>
            <person name="Raleigh E."/>
            <person name="Rao D.N."/>
            <person name="Reich N."/>
            <person name="Repin V.E."/>
            <person name="Selker E.U."/>
            <person name="Shaw P.C."/>
            <person name="Stein D.C."/>
            <person name="Stoddard B.L."/>
            <person name="Szybalski W."/>
            <person name="Trautner T.A."/>
            <person name="Van Etten J.L."/>
            <person name="Vitor J.M."/>
            <person name="Wilson G.G."/>
            <person name="Xu S.Y."/>
        </authorList>
    </citation>
    <scope>NOMENCLATURE</scope>
    <scope>SUBTYPE</scope>
</reference>
<reference key="6">
    <citation type="journal article" date="2020" name="Nucleic Acids Res.">
        <title>Methyltransferase DnmA is responsible for genome-wide N6-methyladenosine modifications at non-palindromic recognition sites in Bacillus subtilis.</title>
        <authorList>
            <person name="Nye T.M."/>
            <person name="van Gijtenbeek L.A."/>
            <person name="Stevens A.G."/>
            <person name="Schroeder J.W."/>
            <person name="Randall J.R."/>
            <person name="Matthews L.A."/>
            <person name="Simmons L.A."/>
        </authorList>
    </citation>
    <scope>FUNCTION</scope>
    <scope>DISRUPTION PHENOTYPE</scope>
    <source>
        <strain>168 / PY79</strain>
    </source>
</reference>
<dbReference type="EC" id="3.1.21.4" evidence="3"/>
<dbReference type="EMBL" id="AB007637">
    <property type="protein sequence ID" value="BAA22753.1"/>
    <property type="molecule type" value="Genomic_DNA"/>
</dbReference>
<dbReference type="EMBL" id="AL009126">
    <property type="protein sequence ID" value="CAB12428.1"/>
    <property type="molecule type" value="Genomic_DNA"/>
</dbReference>
<dbReference type="PIR" id="C69788">
    <property type="entry name" value="C69788"/>
</dbReference>
<dbReference type="RefSeq" id="WP_003244216.1">
    <property type="nucleotide sequence ID" value="NZ_OZ025638.1"/>
</dbReference>
<dbReference type="FunCoup" id="O35025">
    <property type="interactions" value="23"/>
</dbReference>
<dbReference type="STRING" id="224308.BSU06090"/>
<dbReference type="REBASE" id="156235">
    <property type="entry name" value="Bsu16045ORF661P"/>
</dbReference>
<dbReference type="REBASE" id="619">
    <property type="entry name" value="BsuMI"/>
</dbReference>
<dbReference type="jPOST" id="O35025"/>
<dbReference type="PaxDb" id="224308-BSU06090"/>
<dbReference type="EnsemblBacteria" id="CAB12428">
    <property type="protein sequence ID" value="CAB12428"/>
    <property type="gene ID" value="BSU_06090"/>
</dbReference>
<dbReference type="GeneID" id="938002"/>
<dbReference type="KEGG" id="bsu:BSU06090"/>
<dbReference type="PATRIC" id="fig|224308.179.peg.660"/>
<dbReference type="InParanoid" id="O35025"/>
<dbReference type="OrthoDB" id="9871387at2"/>
<dbReference type="BioCyc" id="BSUB:BSU06090-MONOMER"/>
<dbReference type="PRO" id="PR:O35025"/>
<dbReference type="Proteomes" id="UP000001570">
    <property type="component" value="Chromosome"/>
</dbReference>
<dbReference type="GO" id="GO:0009036">
    <property type="term" value="F:type II site-specific deoxyribonuclease activity"/>
    <property type="evidence" value="ECO:0007669"/>
    <property type="project" value="UniProtKB-EC"/>
</dbReference>
<dbReference type="GO" id="GO:0009307">
    <property type="term" value="P:DNA restriction-modification system"/>
    <property type="evidence" value="ECO:0007669"/>
    <property type="project" value="UniProtKB-KW"/>
</dbReference>
<protein>
    <recommendedName>
        <fullName evidence="5">Type II restriction enzyme BsuMI component YdiR</fullName>
        <shortName>R.BsuM</shortName>
        <shortName>R.BsuMI</shortName>
        <ecNumber evidence="3">3.1.21.4</ecNumber>
    </recommendedName>
    <alternativeName>
        <fullName>Endonuclease BsuMI component YdiR</fullName>
    </alternativeName>
    <alternativeName>
        <fullName>Type-2 restriction enzyme BsuMI component YdiR</fullName>
    </alternativeName>
</protein>
<name>YDIR_BACSU</name>